<evidence type="ECO:0000250" key="1"/>
<evidence type="ECO:0000255" key="2"/>
<evidence type="ECO:0000305" key="3"/>
<gene>
    <name type="primary">mnmG</name>
    <name type="synonym">gidA</name>
    <name type="ordered locus">CRP_002</name>
</gene>
<keyword id="KW-0963">Cytoplasm</keyword>
<keyword id="KW-0274">FAD</keyword>
<keyword id="KW-0285">Flavoprotein</keyword>
<keyword id="KW-0520">NAD</keyword>
<keyword id="KW-0819">tRNA processing</keyword>
<proteinExistence type="inferred from homology"/>
<accession>Q05FY8</accession>
<protein>
    <recommendedName>
        <fullName>tRNA uridine 5-carboxymethylaminomethyl modification enzyme MnmG</fullName>
    </recommendedName>
    <alternativeName>
        <fullName>Glucose-inhibited division protein A</fullName>
    </alternativeName>
</protein>
<dbReference type="EMBL" id="AP009180">
    <property type="protein sequence ID" value="BAF35033.1"/>
    <property type="molecule type" value="Genomic_DNA"/>
</dbReference>
<dbReference type="RefSeq" id="WP_011672225.1">
    <property type="nucleotide sequence ID" value="NC_008512.1"/>
</dbReference>
<dbReference type="SMR" id="Q05FY8"/>
<dbReference type="STRING" id="387662.CRP_002"/>
<dbReference type="KEGG" id="crp:CRP_002"/>
<dbReference type="HOGENOM" id="CLU_007831_0_0_6"/>
<dbReference type="OrthoDB" id="9815560at2"/>
<dbReference type="Proteomes" id="UP000000777">
    <property type="component" value="Chromosome"/>
</dbReference>
<dbReference type="GO" id="GO:0005829">
    <property type="term" value="C:cytosol"/>
    <property type="evidence" value="ECO:0007669"/>
    <property type="project" value="TreeGrafter"/>
</dbReference>
<dbReference type="GO" id="GO:0050660">
    <property type="term" value="F:flavin adenine dinucleotide binding"/>
    <property type="evidence" value="ECO:0007669"/>
    <property type="project" value="InterPro"/>
</dbReference>
<dbReference type="GO" id="GO:0030488">
    <property type="term" value="P:tRNA methylation"/>
    <property type="evidence" value="ECO:0007669"/>
    <property type="project" value="TreeGrafter"/>
</dbReference>
<dbReference type="GO" id="GO:0002098">
    <property type="term" value="P:tRNA wobble uridine modification"/>
    <property type="evidence" value="ECO:0007669"/>
    <property type="project" value="TreeGrafter"/>
</dbReference>
<dbReference type="Gene3D" id="3.50.50.60">
    <property type="entry name" value="FAD/NAD(P)-binding domain"/>
    <property type="match status" value="2"/>
</dbReference>
<dbReference type="InterPro" id="IPR036188">
    <property type="entry name" value="FAD/NAD-bd_sf"/>
</dbReference>
<dbReference type="InterPro" id="IPR002218">
    <property type="entry name" value="MnmG-rel"/>
</dbReference>
<dbReference type="InterPro" id="IPR020595">
    <property type="entry name" value="MnmG-rel_CS"/>
</dbReference>
<dbReference type="InterPro" id="IPR040131">
    <property type="entry name" value="MnmG_N"/>
</dbReference>
<dbReference type="PANTHER" id="PTHR11806">
    <property type="entry name" value="GLUCOSE INHIBITED DIVISION PROTEIN A"/>
    <property type="match status" value="1"/>
</dbReference>
<dbReference type="PANTHER" id="PTHR11806:SF0">
    <property type="entry name" value="PROTEIN MTO1 HOMOLOG, MITOCHONDRIAL"/>
    <property type="match status" value="1"/>
</dbReference>
<dbReference type="Pfam" id="PF01134">
    <property type="entry name" value="GIDA"/>
    <property type="match status" value="1"/>
</dbReference>
<dbReference type="SUPFAM" id="SSF51905">
    <property type="entry name" value="FAD/NAD(P)-binding domain"/>
    <property type="match status" value="1"/>
</dbReference>
<dbReference type="PROSITE" id="PS01280">
    <property type="entry name" value="GIDA_1"/>
    <property type="match status" value="1"/>
</dbReference>
<dbReference type="PROSITE" id="PS01281">
    <property type="entry name" value="GIDA_2"/>
    <property type="match status" value="1"/>
</dbReference>
<sequence length="500" mass="58315">MNIFNIIIIGAGHSGIEAAISASKICNKIKIITSNLENLGIMSCNPSIGGIGKSHLVKELELFGGIMPEASDYSRIHSKLLNYKKGESVHSLRYQIDRILYKNYILKILFLKKNILIEQNEINKIIRFKKKILIFNKLKFFNIAKIIIVCAGTFINSKIYIGKNIKALNKAEKKSISYSFKKINLFISKLKTGTPPRLDLNYLNYKKLSVQYSDYTISYGKNFNFNNNVKCFITNTDNKINNFIKKNIKNSSLFNLKFKSIGPRYCPSIEDKIFKFPNNKNHQIFLEPESYFSKEIYVNGLSNSLSYNIQKKLIKKILGIKKSYIIRYAYNIQYDYFDPRCLKISLNIKFANNIFLAGQINGTTGYEEASSQGFVAGINSARKILKLPLWKPKKWNSYIGVLLYDLTNFGIQEPYRIFTSKSDNRLFLRFDNAIFRLINISYYLGCLPIVKFKYYNSLIYKFYKNLINIRKIKLFDNFYLFKLIIIMSKYYGYIKKKYFK</sequence>
<comment type="function">
    <text evidence="1">NAD-binding protein involved in the addition of a carboxymethylaminomethyl (cmnm) group at the wobble position (U34) of certain tRNAs, forming tRNA-cmnm(5)s(2)U34.</text>
</comment>
<comment type="cofactor">
    <cofactor evidence="1">
        <name>FAD</name>
        <dbReference type="ChEBI" id="CHEBI:57692"/>
    </cofactor>
</comment>
<comment type="subunit">
    <text evidence="1">Homodimer. Heterotetramer of two MnmE and two MnmG subunits.</text>
</comment>
<comment type="subcellular location">
    <subcellularLocation>
        <location evidence="1">Cytoplasm</location>
    </subcellularLocation>
</comment>
<comment type="similarity">
    <text evidence="3">Belongs to the MnmG family.</text>
</comment>
<feature type="chain" id="PRO_0000345251" description="tRNA uridine 5-carboxymethylaminomethyl modification enzyme MnmG">
    <location>
        <begin position="1"/>
        <end position="500"/>
    </location>
</feature>
<feature type="binding site" evidence="1">
    <location>
        <begin position="10"/>
        <end position="15"/>
    </location>
    <ligand>
        <name>FAD</name>
        <dbReference type="ChEBI" id="CHEBI:57692"/>
    </ligand>
</feature>
<feature type="binding site" evidence="2">
    <location>
        <begin position="262"/>
        <end position="276"/>
    </location>
    <ligand>
        <name>NAD(+)</name>
        <dbReference type="ChEBI" id="CHEBI:57540"/>
    </ligand>
</feature>
<organism>
    <name type="scientific">Carsonella ruddii (strain PV)</name>
    <dbReference type="NCBI Taxonomy" id="387662"/>
    <lineage>
        <taxon>Bacteria</taxon>
        <taxon>Pseudomonadati</taxon>
        <taxon>Pseudomonadota</taxon>
        <taxon>Gammaproteobacteria</taxon>
        <taxon>Oceanospirillales</taxon>
        <taxon>Halomonadaceae</taxon>
        <taxon>Zymobacter group</taxon>
        <taxon>Candidatus Carsonella</taxon>
    </lineage>
</organism>
<name>MNMG_CARRP</name>
<reference key="1">
    <citation type="journal article" date="2006" name="Science">
        <title>The 160-kilobase genome of the bacterial endosymbiont Carsonella.</title>
        <authorList>
            <person name="Nakabachi A."/>
            <person name="Yamashita A."/>
            <person name="Toh H."/>
            <person name="Ishikawa H."/>
            <person name="Dunbar H.E."/>
            <person name="Moran N.A."/>
            <person name="Hattori M."/>
        </authorList>
    </citation>
    <scope>NUCLEOTIDE SEQUENCE [LARGE SCALE GENOMIC DNA]</scope>
    <source>
        <strain>PV</strain>
    </source>
</reference>